<accession>Q3J0Z1</accession>
<gene>
    <name evidence="1" type="primary">pyrG</name>
    <name type="ordered locus">RHOS4_19750</name>
    <name type="ORF">RSP_0368</name>
</gene>
<evidence type="ECO:0000255" key="1">
    <source>
        <dbReference type="HAMAP-Rule" id="MF_01227"/>
    </source>
</evidence>
<organism>
    <name type="scientific">Cereibacter sphaeroides (strain ATCC 17023 / DSM 158 / JCM 6121 / CCUG 31486 / LMG 2827 / NBRC 12203 / NCIMB 8253 / ATH 2.4.1.)</name>
    <name type="common">Rhodobacter sphaeroides</name>
    <dbReference type="NCBI Taxonomy" id="272943"/>
    <lineage>
        <taxon>Bacteria</taxon>
        <taxon>Pseudomonadati</taxon>
        <taxon>Pseudomonadota</taxon>
        <taxon>Alphaproteobacteria</taxon>
        <taxon>Rhodobacterales</taxon>
        <taxon>Paracoccaceae</taxon>
        <taxon>Cereibacter</taxon>
    </lineage>
</organism>
<dbReference type="EC" id="6.3.4.2" evidence="1"/>
<dbReference type="EMBL" id="CP000143">
    <property type="protein sequence ID" value="ABA79543.1"/>
    <property type="molecule type" value="Genomic_DNA"/>
</dbReference>
<dbReference type="RefSeq" id="WP_011338186.1">
    <property type="nucleotide sequence ID" value="NC_007493.2"/>
</dbReference>
<dbReference type="RefSeq" id="YP_353444.1">
    <property type="nucleotide sequence ID" value="NC_007493.2"/>
</dbReference>
<dbReference type="SMR" id="Q3J0Z1"/>
<dbReference type="STRING" id="272943.RSP_0368"/>
<dbReference type="MEROPS" id="C26.964"/>
<dbReference type="EnsemblBacteria" id="ABA79543">
    <property type="protein sequence ID" value="ABA79543"/>
    <property type="gene ID" value="RSP_0368"/>
</dbReference>
<dbReference type="GeneID" id="3718992"/>
<dbReference type="KEGG" id="rsp:RSP_0368"/>
<dbReference type="PATRIC" id="fig|272943.9.peg.2314"/>
<dbReference type="eggNOG" id="COG0504">
    <property type="taxonomic scope" value="Bacteria"/>
</dbReference>
<dbReference type="OrthoDB" id="9801107at2"/>
<dbReference type="PhylomeDB" id="Q3J0Z1"/>
<dbReference type="UniPathway" id="UPA00159">
    <property type="reaction ID" value="UER00277"/>
</dbReference>
<dbReference type="Proteomes" id="UP000002703">
    <property type="component" value="Chromosome 1"/>
</dbReference>
<dbReference type="GO" id="GO:0005829">
    <property type="term" value="C:cytosol"/>
    <property type="evidence" value="ECO:0007669"/>
    <property type="project" value="TreeGrafter"/>
</dbReference>
<dbReference type="GO" id="GO:0005524">
    <property type="term" value="F:ATP binding"/>
    <property type="evidence" value="ECO:0007669"/>
    <property type="project" value="UniProtKB-KW"/>
</dbReference>
<dbReference type="GO" id="GO:0003883">
    <property type="term" value="F:CTP synthase activity"/>
    <property type="evidence" value="ECO:0007669"/>
    <property type="project" value="UniProtKB-UniRule"/>
</dbReference>
<dbReference type="GO" id="GO:0004359">
    <property type="term" value="F:glutaminase activity"/>
    <property type="evidence" value="ECO:0007669"/>
    <property type="project" value="RHEA"/>
</dbReference>
<dbReference type="GO" id="GO:0042802">
    <property type="term" value="F:identical protein binding"/>
    <property type="evidence" value="ECO:0007669"/>
    <property type="project" value="TreeGrafter"/>
</dbReference>
<dbReference type="GO" id="GO:0046872">
    <property type="term" value="F:metal ion binding"/>
    <property type="evidence" value="ECO:0007669"/>
    <property type="project" value="UniProtKB-KW"/>
</dbReference>
<dbReference type="GO" id="GO:0044210">
    <property type="term" value="P:'de novo' CTP biosynthetic process"/>
    <property type="evidence" value="ECO:0007669"/>
    <property type="project" value="UniProtKB-UniRule"/>
</dbReference>
<dbReference type="GO" id="GO:0019856">
    <property type="term" value="P:pyrimidine nucleobase biosynthetic process"/>
    <property type="evidence" value="ECO:0007669"/>
    <property type="project" value="TreeGrafter"/>
</dbReference>
<dbReference type="CDD" id="cd03113">
    <property type="entry name" value="CTPS_N"/>
    <property type="match status" value="1"/>
</dbReference>
<dbReference type="CDD" id="cd01746">
    <property type="entry name" value="GATase1_CTP_Synthase"/>
    <property type="match status" value="1"/>
</dbReference>
<dbReference type="FunFam" id="3.40.50.300:FF:000009">
    <property type="entry name" value="CTP synthase"/>
    <property type="match status" value="1"/>
</dbReference>
<dbReference type="FunFam" id="3.40.50.880:FF:000002">
    <property type="entry name" value="CTP synthase"/>
    <property type="match status" value="1"/>
</dbReference>
<dbReference type="Gene3D" id="3.40.50.880">
    <property type="match status" value="1"/>
</dbReference>
<dbReference type="Gene3D" id="3.40.50.300">
    <property type="entry name" value="P-loop containing nucleotide triphosphate hydrolases"/>
    <property type="match status" value="1"/>
</dbReference>
<dbReference type="HAMAP" id="MF_01227">
    <property type="entry name" value="PyrG"/>
    <property type="match status" value="1"/>
</dbReference>
<dbReference type="InterPro" id="IPR029062">
    <property type="entry name" value="Class_I_gatase-like"/>
</dbReference>
<dbReference type="InterPro" id="IPR004468">
    <property type="entry name" value="CTP_synthase"/>
</dbReference>
<dbReference type="InterPro" id="IPR017456">
    <property type="entry name" value="CTP_synthase_N"/>
</dbReference>
<dbReference type="InterPro" id="IPR017926">
    <property type="entry name" value="GATASE"/>
</dbReference>
<dbReference type="InterPro" id="IPR033828">
    <property type="entry name" value="GATase1_CTP_Synthase"/>
</dbReference>
<dbReference type="InterPro" id="IPR027417">
    <property type="entry name" value="P-loop_NTPase"/>
</dbReference>
<dbReference type="NCBIfam" id="NF003792">
    <property type="entry name" value="PRK05380.1"/>
    <property type="match status" value="1"/>
</dbReference>
<dbReference type="NCBIfam" id="TIGR00337">
    <property type="entry name" value="PyrG"/>
    <property type="match status" value="1"/>
</dbReference>
<dbReference type="PANTHER" id="PTHR11550">
    <property type="entry name" value="CTP SYNTHASE"/>
    <property type="match status" value="1"/>
</dbReference>
<dbReference type="PANTHER" id="PTHR11550:SF0">
    <property type="entry name" value="CTP SYNTHASE-RELATED"/>
    <property type="match status" value="1"/>
</dbReference>
<dbReference type="Pfam" id="PF06418">
    <property type="entry name" value="CTP_synth_N"/>
    <property type="match status" value="1"/>
</dbReference>
<dbReference type="Pfam" id="PF00117">
    <property type="entry name" value="GATase"/>
    <property type="match status" value="1"/>
</dbReference>
<dbReference type="SUPFAM" id="SSF52317">
    <property type="entry name" value="Class I glutamine amidotransferase-like"/>
    <property type="match status" value="1"/>
</dbReference>
<dbReference type="SUPFAM" id="SSF52540">
    <property type="entry name" value="P-loop containing nucleoside triphosphate hydrolases"/>
    <property type="match status" value="1"/>
</dbReference>
<dbReference type="PROSITE" id="PS51273">
    <property type="entry name" value="GATASE_TYPE_1"/>
    <property type="match status" value="1"/>
</dbReference>
<name>PYRG_CERS4</name>
<reference key="1">
    <citation type="submission" date="2005-09" db="EMBL/GenBank/DDBJ databases">
        <title>Complete sequence of chromosome 1 of Rhodobacter sphaeroides 2.4.1.</title>
        <authorList>
            <person name="Copeland A."/>
            <person name="Lucas S."/>
            <person name="Lapidus A."/>
            <person name="Barry K."/>
            <person name="Detter J.C."/>
            <person name="Glavina T."/>
            <person name="Hammon N."/>
            <person name="Israni S."/>
            <person name="Pitluck S."/>
            <person name="Richardson P."/>
            <person name="Mackenzie C."/>
            <person name="Choudhary M."/>
            <person name="Larimer F."/>
            <person name="Hauser L.J."/>
            <person name="Land M."/>
            <person name="Donohue T.J."/>
            <person name="Kaplan S."/>
        </authorList>
    </citation>
    <scope>NUCLEOTIDE SEQUENCE [LARGE SCALE GENOMIC DNA]</scope>
    <source>
        <strain>ATCC 17023 / DSM 158 / JCM 6121 / CCUG 31486 / LMG 2827 / NBRC 12203 / NCIMB 8253 / ATH 2.4.1.</strain>
    </source>
</reference>
<sequence length="547" mass="61030">MARYVFITGGVVSSLGKGLASAALGALLQARGFSVRLRKLDPYLNVDPGTMSPFEHGEVFVTDDGAETDLDLGHYERFTGVSARKTDSVSSGRIYSNVLEKERRGDYLGKTIQVIPHVTNEIKDFLRVGEDEVDFMLCEIGGTVGDIEGLPFFEAIRQFAQDKPRGQCIFVHLTLLPYVSASGELKTKPTQHSVKELRSIGIAPDVLLLRSERAIPEKEREKIALFCNVRKEAVIAAYDLKTIYEAPLAYHREGLDQAVLDAFGISPAPKPNLDRWVDVMDRLENAEGEVRVAIVGKYTQLEDAYKSIAEALTHGGMANRTRVRAEWINAELFEREDPSPFLEGFHAILVPGGFGERGTEGKIRAAQYAREKAIPYLGICLGMQMAVIEAARNLAQVKDAGSEEFDHEVGKKRFTPVVYHLKEWIQGNHIVERKHDDDKGGTMRLGAYTAALTPGSRVSEIYHATEIEERHRHRYEVDVRYREALEGCGLTFSGMSPDGRLPEIVEIKDHPWFIGVQFHPELKSKPFAPHPLFADFVRAAVEVSRLV</sequence>
<comment type="function">
    <text evidence="1">Catalyzes the ATP-dependent amination of UTP to CTP with either L-glutamine or ammonia as the source of nitrogen. Regulates intracellular CTP levels through interactions with the four ribonucleotide triphosphates.</text>
</comment>
<comment type="catalytic activity">
    <reaction evidence="1">
        <text>UTP + L-glutamine + ATP + H2O = CTP + L-glutamate + ADP + phosphate + 2 H(+)</text>
        <dbReference type="Rhea" id="RHEA:26426"/>
        <dbReference type="ChEBI" id="CHEBI:15377"/>
        <dbReference type="ChEBI" id="CHEBI:15378"/>
        <dbReference type="ChEBI" id="CHEBI:29985"/>
        <dbReference type="ChEBI" id="CHEBI:30616"/>
        <dbReference type="ChEBI" id="CHEBI:37563"/>
        <dbReference type="ChEBI" id="CHEBI:43474"/>
        <dbReference type="ChEBI" id="CHEBI:46398"/>
        <dbReference type="ChEBI" id="CHEBI:58359"/>
        <dbReference type="ChEBI" id="CHEBI:456216"/>
        <dbReference type="EC" id="6.3.4.2"/>
    </reaction>
</comment>
<comment type="catalytic activity">
    <reaction evidence="1">
        <text>L-glutamine + H2O = L-glutamate + NH4(+)</text>
        <dbReference type="Rhea" id="RHEA:15889"/>
        <dbReference type="ChEBI" id="CHEBI:15377"/>
        <dbReference type="ChEBI" id="CHEBI:28938"/>
        <dbReference type="ChEBI" id="CHEBI:29985"/>
        <dbReference type="ChEBI" id="CHEBI:58359"/>
    </reaction>
</comment>
<comment type="catalytic activity">
    <reaction evidence="1">
        <text>UTP + NH4(+) + ATP = CTP + ADP + phosphate + 2 H(+)</text>
        <dbReference type="Rhea" id="RHEA:16597"/>
        <dbReference type="ChEBI" id="CHEBI:15378"/>
        <dbReference type="ChEBI" id="CHEBI:28938"/>
        <dbReference type="ChEBI" id="CHEBI:30616"/>
        <dbReference type="ChEBI" id="CHEBI:37563"/>
        <dbReference type="ChEBI" id="CHEBI:43474"/>
        <dbReference type="ChEBI" id="CHEBI:46398"/>
        <dbReference type="ChEBI" id="CHEBI:456216"/>
    </reaction>
</comment>
<comment type="activity regulation">
    <text evidence="1">Allosterically activated by GTP, when glutamine is the substrate; GTP has no effect on the reaction when ammonia is the substrate. The allosteric effector GTP functions by stabilizing the protein conformation that binds the tetrahedral intermediate(s) formed during glutamine hydrolysis. Inhibited by the product CTP, via allosteric rather than competitive inhibition.</text>
</comment>
<comment type="pathway">
    <text evidence="1">Pyrimidine metabolism; CTP biosynthesis via de novo pathway; CTP from UDP: step 2/2.</text>
</comment>
<comment type="subunit">
    <text evidence="1">Homotetramer.</text>
</comment>
<comment type="miscellaneous">
    <text evidence="1">CTPSs have evolved a hybrid strategy for distinguishing between UTP and CTP. The overlapping regions of the product feedback inhibitory and substrate sites recognize a common feature in both compounds, the triphosphate moiety. To differentiate isosteric substrate and product pyrimidine rings, an additional pocket far from the expected kinase/ligase catalytic site, specifically recognizes the cytosine and ribose portions of the product inhibitor.</text>
</comment>
<comment type="similarity">
    <text evidence="1">Belongs to the CTP synthase family.</text>
</comment>
<proteinExistence type="inferred from homology"/>
<keyword id="KW-0067">ATP-binding</keyword>
<keyword id="KW-0315">Glutamine amidotransferase</keyword>
<keyword id="KW-0436">Ligase</keyword>
<keyword id="KW-0460">Magnesium</keyword>
<keyword id="KW-0479">Metal-binding</keyword>
<keyword id="KW-0547">Nucleotide-binding</keyword>
<keyword id="KW-0665">Pyrimidine biosynthesis</keyword>
<keyword id="KW-1185">Reference proteome</keyword>
<protein>
    <recommendedName>
        <fullName evidence="1">CTP synthase</fullName>
        <ecNumber evidence="1">6.3.4.2</ecNumber>
    </recommendedName>
    <alternativeName>
        <fullName evidence="1">Cytidine 5'-triphosphate synthase</fullName>
    </alternativeName>
    <alternativeName>
        <fullName evidence="1">Cytidine triphosphate synthetase</fullName>
        <shortName evidence="1">CTP synthetase</shortName>
        <shortName evidence="1">CTPS</shortName>
    </alternativeName>
    <alternativeName>
        <fullName evidence="1">UTP--ammonia ligase</fullName>
    </alternativeName>
</protein>
<feature type="chain" id="PRO_0000266195" description="CTP synthase">
    <location>
        <begin position="1"/>
        <end position="547"/>
    </location>
</feature>
<feature type="domain" description="Glutamine amidotransferase type-1" evidence="1">
    <location>
        <begin position="291"/>
        <end position="546"/>
    </location>
</feature>
<feature type="region of interest" description="Amidoligase domain" evidence="1">
    <location>
        <begin position="1"/>
        <end position="265"/>
    </location>
</feature>
<feature type="active site" description="Nucleophile; for glutamine hydrolysis" evidence="1">
    <location>
        <position position="380"/>
    </location>
</feature>
<feature type="active site" evidence="1">
    <location>
        <position position="519"/>
    </location>
</feature>
<feature type="active site" evidence="1">
    <location>
        <position position="521"/>
    </location>
</feature>
<feature type="binding site" evidence="1">
    <location>
        <position position="13"/>
    </location>
    <ligand>
        <name>CTP</name>
        <dbReference type="ChEBI" id="CHEBI:37563"/>
        <note>allosteric inhibitor</note>
    </ligand>
</feature>
<feature type="binding site" evidence="1">
    <location>
        <position position="13"/>
    </location>
    <ligand>
        <name>UTP</name>
        <dbReference type="ChEBI" id="CHEBI:46398"/>
    </ligand>
</feature>
<feature type="binding site" evidence="1">
    <location>
        <begin position="14"/>
        <end position="19"/>
    </location>
    <ligand>
        <name>ATP</name>
        <dbReference type="ChEBI" id="CHEBI:30616"/>
    </ligand>
</feature>
<feature type="binding site" evidence="1">
    <location>
        <position position="71"/>
    </location>
    <ligand>
        <name>ATP</name>
        <dbReference type="ChEBI" id="CHEBI:30616"/>
    </ligand>
</feature>
<feature type="binding site" evidence="1">
    <location>
        <position position="71"/>
    </location>
    <ligand>
        <name>Mg(2+)</name>
        <dbReference type="ChEBI" id="CHEBI:18420"/>
    </ligand>
</feature>
<feature type="binding site" evidence="1">
    <location>
        <position position="139"/>
    </location>
    <ligand>
        <name>Mg(2+)</name>
        <dbReference type="ChEBI" id="CHEBI:18420"/>
    </ligand>
</feature>
<feature type="binding site" evidence="1">
    <location>
        <begin position="146"/>
        <end position="148"/>
    </location>
    <ligand>
        <name>CTP</name>
        <dbReference type="ChEBI" id="CHEBI:37563"/>
        <note>allosteric inhibitor</note>
    </ligand>
</feature>
<feature type="binding site" evidence="1">
    <location>
        <begin position="186"/>
        <end position="191"/>
    </location>
    <ligand>
        <name>CTP</name>
        <dbReference type="ChEBI" id="CHEBI:37563"/>
        <note>allosteric inhibitor</note>
    </ligand>
</feature>
<feature type="binding site" evidence="1">
    <location>
        <begin position="186"/>
        <end position="191"/>
    </location>
    <ligand>
        <name>UTP</name>
        <dbReference type="ChEBI" id="CHEBI:46398"/>
    </ligand>
</feature>
<feature type="binding site" evidence="1">
    <location>
        <position position="222"/>
    </location>
    <ligand>
        <name>CTP</name>
        <dbReference type="ChEBI" id="CHEBI:37563"/>
        <note>allosteric inhibitor</note>
    </ligand>
</feature>
<feature type="binding site" evidence="1">
    <location>
        <position position="222"/>
    </location>
    <ligand>
        <name>UTP</name>
        <dbReference type="ChEBI" id="CHEBI:46398"/>
    </ligand>
</feature>
<feature type="binding site" evidence="1">
    <location>
        <position position="353"/>
    </location>
    <ligand>
        <name>L-glutamine</name>
        <dbReference type="ChEBI" id="CHEBI:58359"/>
    </ligand>
</feature>
<feature type="binding site" evidence="1">
    <location>
        <begin position="381"/>
        <end position="384"/>
    </location>
    <ligand>
        <name>L-glutamine</name>
        <dbReference type="ChEBI" id="CHEBI:58359"/>
    </ligand>
</feature>
<feature type="binding site" evidence="1">
    <location>
        <position position="404"/>
    </location>
    <ligand>
        <name>L-glutamine</name>
        <dbReference type="ChEBI" id="CHEBI:58359"/>
    </ligand>
</feature>
<feature type="binding site" evidence="1">
    <location>
        <position position="474"/>
    </location>
    <ligand>
        <name>L-glutamine</name>
        <dbReference type="ChEBI" id="CHEBI:58359"/>
    </ligand>
</feature>